<reference key="1">
    <citation type="journal article" date="2010" name="BMC Genomics">
        <title>A genomic perspective on the potential of Actinobacillus succinogenes for industrial succinate production.</title>
        <authorList>
            <person name="McKinlay J.B."/>
            <person name="Laivenieks M."/>
            <person name="Schindler B.D."/>
            <person name="McKinlay A.A."/>
            <person name="Siddaramappa S."/>
            <person name="Challacombe J.F."/>
            <person name="Lowry S.R."/>
            <person name="Clum A."/>
            <person name="Lapidus A.L."/>
            <person name="Burkhart K.B."/>
            <person name="Harkins V."/>
            <person name="Vieille C."/>
        </authorList>
    </citation>
    <scope>NUCLEOTIDE SEQUENCE [LARGE SCALE GENOMIC DNA]</scope>
    <source>
        <strain>ATCC 55618 / DSM 22257 / CCUG 43843 / 130Z</strain>
    </source>
</reference>
<name>CH60_ACTSZ</name>
<dbReference type="EC" id="5.6.1.7" evidence="1"/>
<dbReference type="EMBL" id="CP000746">
    <property type="protein sequence ID" value="ABR74035.1"/>
    <property type="molecule type" value="Genomic_DNA"/>
</dbReference>
<dbReference type="RefSeq" id="WP_012072415.1">
    <property type="nucleotide sequence ID" value="NC_009655.1"/>
</dbReference>
<dbReference type="SMR" id="A6VM38"/>
<dbReference type="STRING" id="339671.Asuc_0662"/>
<dbReference type="KEGG" id="asu:Asuc_0662"/>
<dbReference type="eggNOG" id="COG0459">
    <property type="taxonomic scope" value="Bacteria"/>
</dbReference>
<dbReference type="HOGENOM" id="CLU_016503_3_0_6"/>
<dbReference type="OrthoDB" id="9766614at2"/>
<dbReference type="Proteomes" id="UP000001114">
    <property type="component" value="Chromosome"/>
</dbReference>
<dbReference type="GO" id="GO:0005737">
    <property type="term" value="C:cytoplasm"/>
    <property type="evidence" value="ECO:0007669"/>
    <property type="project" value="UniProtKB-SubCell"/>
</dbReference>
<dbReference type="GO" id="GO:0005524">
    <property type="term" value="F:ATP binding"/>
    <property type="evidence" value="ECO:0007669"/>
    <property type="project" value="UniProtKB-UniRule"/>
</dbReference>
<dbReference type="GO" id="GO:0140662">
    <property type="term" value="F:ATP-dependent protein folding chaperone"/>
    <property type="evidence" value="ECO:0007669"/>
    <property type="project" value="InterPro"/>
</dbReference>
<dbReference type="GO" id="GO:0016853">
    <property type="term" value="F:isomerase activity"/>
    <property type="evidence" value="ECO:0007669"/>
    <property type="project" value="UniProtKB-KW"/>
</dbReference>
<dbReference type="GO" id="GO:0051082">
    <property type="term" value="F:unfolded protein binding"/>
    <property type="evidence" value="ECO:0007669"/>
    <property type="project" value="UniProtKB-UniRule"/>
</dbReference>
<dbReference type="GO" id="GO:0042026">
    <property type="term" value="P:protein refolding"/>
    <property type="evidence" value="ECO:0007669"/>
    <property type="project" value="UniProtKB-UniRule"/>
</dbReference>
<dbReference type="CDD" id="cd03344">
    <property type="entry name" value="GroEL"/>
    <property type="match status" value="1"/>
</dbReference>
<dbReference type="FunFam" id="1.10.560.10:FF:000001">
    <property type="entry name" value="60 kDa chaperonin"/>
    <property type="match status" value="1"/>
</dbReference>
<dbReference type="FunFam" id="3.50.7.10:FF:000001">
    <property type="entry name" value="60 kDa chaperonin"/>
    <property type="match status" value="1"/>
</dbReference>
<dbReference type="Gene3D" id="3.50.7.10">
    <property type="entry name" value="GroEL"/>
    <property type="match status" value="1"/>
</dbReference>
<dbReference type="Gene3D" id="1.10.560.10">
    <property type="entry name" value="GroEL-like equatorial domain"/>
    <property type="match status" value="1"/>
</dbReference>
<dbReference type="Gene3D" id="3.30.260.10">
    <property type="entry name" value="TCP-1-like chaperonin intermediate domain"/>
    <property type="match status" value="1"/>
</dbReference>
<dbReference type="HAMAP" id="MF_00600">
    <property type="entry name" value="CH60"/>
    <property type="match status" value="1"/>
</dbReference>
<dbReference type="InterPro" id="IPR018370">
    <property type="entry name" value="Chaperonin_Cpn60_CS"/>
</dbReference>
<dbReference type="InterPro" id="IPR001844">
    <property type="entry name" value="Cpn60/GroEL"/>
</dbReference>
<dbReference type="InterPro" id="IPR002423">
    <property type="entry name" value="Cpn60/GroEL/TCP-1"/>
</dbReference>
<dbReference type="InterPro" id="IPR027409">
    <property type="entry name" value="GroEL-like_apical_dom_sf"/>
</dbReference>
<dbReference type="InterPro" id="IPR027413">
    <property type="entry name" value="GROEL-like_equatorial_sf"/>
</dbReference>
<dbReference type="InterPro" id="IPR027410">
    <property type="entry name" value="TCP-1-like_intermed_sf"/>
</dbReference>
<dbReference type="NCBIfam" id="TIGR02348">
    <property type="entry name" value="GroEL"/>
    <property type="match status" value="1"/>
</dbReference>
<dbReference type="NCBIfam" id="NF000592">
    <property type="entry name" value="PRK00013.1"/>
    <property type="match status" value="1"/>
</dbReference>
<dbReference type="NCBIfam" id="NF009487">
    <property type="entry name" value="PRK12849.1"/>
    <property type="match status" value="1"/>
</dbReference>
<dbReference type="NCBIfam" id="NF009488">
    <property type="entry name" value="PRK12850.1"/>
    <property type="match status" value="1"/>
</dbReference>
<dbReference type="NCBIfam" id="NF009489">
    <property type="entry name" value="PRK12851.1"/>
    <property type="match status" value="1"/>
</dbReference>
<dbReference type="PANTHER" id="PTHR45633">
    <property type="entry name" value="60 KDA HEAT SHOCK PROTEIN, MITOCHONDRIAL"/>
    <property type="match status" value="1"/>
</dbReference>
<dbReference type="Pfam" id="PF00118">
    <property type="entry name" value="Cpn60_TCP1"/>
    <property type="match status" value="1"/>
</dbReference>
<dbReference type="PRINTS" id="PR00298">
    <property type="entry name" value="CHAPERONIN60"/>
</dbReference>
<dbReference type="SUPFAM" id="SSF52029">
    <property type="entry name" value="GroEL apical domain-like"/>
    <property type="match status" value="1"/>
</dbReference>
<dbReference type="SUPFAM" id="SSF48592">
    <property type="entry name" value="GroEL equatorial domain-like"/>
    <property type="match status" value="1"/>
</dbReference>
<dbReference type="SUPFAM" id="SSF54849">
    <property type="entry name" value="GroEL-intermediate domain like"/>
    <property type="match status" value="1"/>
</dbReference>
<dbReference type="PROSITE" id="PS00296">
    <property type="entry name" value="CHAPERONINS_CPN60"/>
    <property type="match status" value="1"/>
</dbReference>
<accession>A6VM38</accession>
<feature type="chain" id="PRO_1000072628" description="Chaperonin GroEL">
    <location>
        <begin position="1"/>
        <end position="547"/>
    </location>
</feature>
<feature type="binding site" evidence="1">
    <location>
        <begin position="30"/>
        <end position="33"/>
    </location>
    <ligand>
        <name>ATP</name>
        <dbReference type="ChEBI" id="CHEBI:30616"/>
    </ligand>
</feature>
<feature type="binding site" evidence="1">
    <location>
        <position position="51"/>
    </location>
    <ligand>
        <name>ATP</name>
        <dbReference type="ChEBI" id="CHEBI:30616"/>
    </ligand>
</feature>
<feature type="binding site" evidence="1">
    <location>
        <begin position="87"/>
        <end position="91"/>
    </location>
    <ligand>
        <name>ATP</name>
        <dbReference type="ChEBI" id="CHEBI:30616"/>
    </ligand>
</feature>
<feature type="binding site" evidence="1">
    <location>
        <position position="415"/>
    </location>
    <ligand>
        <name>ATP</name>
        <dbReference type="ChEBI" id="CHEBI:30616"/>
    </ligand>
</feature>
<feature type="binding site" evidence="1">
    <location>
        <position position="496"/>
    </location>
    <ligand>
        <name>ATP</name>
        <dbReference type="ChEBI" id="CHEBI:30616"/>
    </ligand>
</feature>
<keyword id="KW-0067">ATP-binding</keyword>
<keyword id="KW-0143">Chaperone</keyword>
<keyword id="KW-0963">Cytoplasm</keyword>
<keyword id="KW-0413">Isomerase</keyword>
<keyword id="KW-0547">Nucleotide-binding</keyword>
<keyword id="KW-1185">Reference proteome</keyword>
<protein>
    <recommendedName>
        <fullName evidence="1">Chaperonin GroEL</fullName>
        <ecNumber evidence="1">5.6.1.7</ecNumber>
    </recommendedName>
    <alternativeName>
        <fullName evidence="1">60 kDa chaperonin</fullName>
    </alternativeName>
    <alternativeName>
        <fullName evidence="1">Chaperonin-60</fullName>
        <shortName evidence="1">Cpn60</shortName>
    </alternativeName>
</protein>
<proteinExistence type="inferred from homology"/>
<organism>
    <name type="scientific">Actinobacillus succinogenes (strain ATCC 55618 / DSM 22257 / CCUG 43843 / 130Z)</name>
    <dbReference type="NCBI Taxonomy" id="339671"/>
    <lineage>
        <taxon>Bacteria</taxon>
        <taxon>Pseudomonadati</taxon>
        <taxon>Pseudomonadota</taxon>
        <taxon>Gammaproteobacteria</taxon>
        <taxon>Pasteurellales</taxon>
        <taxon>Pasteurellaceae</taxon>
        <taxon>Actinobacillus</taxon>
    </lineage>
</organism>
<sequence length="547" mass="57393">MAAKDVKFGNDARVKMLAGVNVLADAVKVTLGPKGRNVILDKSFGAPTITKDGVSVAREIELEDKFENMGAQMVKEVASKANDAAGDGTTTATVLAQAIVNEGLKAVAAGMNPMDLKRGIDKAVAAVVSELKALSKPCETSKEIEQVGTISANSDSIVGQLIAQAMEKVGKEGVITVEDGTGLEDELDVVEGMQFDRGYLSPYFINKPETATVEMDNPYILLVDKKISNIRELLPVLEAVAKAGKPLLIIAEDVEGEALATLVVNTMRGIVKVAAVKAPGFGDRRKAMLQDIAILTAGTVISEEIGMELEKAALEDLGQAKRVVINKDNTTIIDGVGDEAQIKGRVAQIRQQIEESTSDYDKEKLQERVAKLAGGVAVIKVGAATEVEMKEKKDRVEDALHATRAAVEEGIVAGGGVALIRAASKAAANLQGDNEEQNVGIKLALRAMEAPLRQIVANAGEEASVVASAVKNGEGNYGYNAGTEEYGDMIAMGILDPTKVTRSALQFAASIAGLMITTEAMVTELPKDDKLDPSAAMGGMGGMGGMM</sequence>
<gene>
    <name evidence="1" type="primary">groEL</name>
    <name evidence="1" type="synonym">groL</name>
    <name type="ordered locus">Asuc_0662</name>
</gene>
<evidence type="ECO:0000255" key="1">
    <source>
        <dbReference type="HAMAP-Rule" id="MF_00600"/>
    </source>
</evidence>
<comment type="function">
    <text evidence="1">Together with its co-chaperonin GroES, plays an essential role in assisting protein folding. The GroEL-GroES system forms a nano-cage that allows encapsulation of the non-native substrate proteins and provides a physical environment optimized to promote and accelerate protein folding.</text>
</comment>
<comment type="catalytic activity">
    <reaction evidence="1">
        <text>ATP + H2O + a folded polypeptide = ADP + phosphate + an unfolded polypeptide.</text>
        <dbReference type="EC" id="5.6.1.7"/>
    </reaction>
</comment>
<comment type="subunit">
    <text evidence="1">Forms a cylinder of 14 subunits composed of two heptameric rings stacked back-to-back. Interacts with the co-chaperonin GroES.</text>
</comment>
<comment type="subcellular location">
    <subcellularLocation>
        <location evidence="1">Cytoplasm</location>
    </subcellularLocation>
</comment>
<comment type="similarity">
    <text evidence="1">Belongs to the chaperonin (HSP60) family.</text>
</comment>